<reference key="1">
    <citation type="journal article" date="2008" name="DNA Res.">
        <title>Comparative genome analysis of Lactobacillus reuteri and Lactobacillus fermentum reveal a genomic island for reuterin and cobalamin production.</title>
        <authorList>
            <person name="Morita H."/>
            <person name="Toh H."/>
            <person name="Fukuda S."/>
            <person name="Horikawa H."/>
            <person name="Oshima K."/>
            <person name="Suzuki T."/>
            <person name="Murakami M."/>
            <person name="Hisamatsu S."/>
            <person name="Kato Y."/>
            <person name="Takizawa T."/>
            <person name="Fukuoka H."/>
            <person name="Yoshimura T."/>
            <person name="Itoh K."/>
            <person name="O'Sullivan D.J."/>
            <person name="McKay L.L."/>
            <person name="Ohno H."/>
            <person name="Kikuchi J."/>
            <person name="Masaoka T."/>
            <person name="Hattori M."/>
        </authorList>
    </citation>
    <scope>NUCLEOTIDE SEQUENCE [LARGE SCALE GENOMIC DNA]</scope>
    <source>
        <strain>JCM 1112</strain>
    </source>
</reference>
<comment type="function">
    <text evidence="1">Catalyzes the attachment of proline to tRNA(Pro) in a two-step reaction: proline is first activated by ATP to form Pro-AMP and then transferred to the acceptor end of tRNA(Pro). As ProRS can inadvertently accommodate and process non-cognate amino acids such as alanine and cysteine, to avoid such errors it has two additional distinct editing activities against alanine. One activity is designated as 'pretransfer' editing and involves the tRNA(Pro)-independent hydrolysis of activated Ala-AMP. The other activity is designated 'posttransfer' editing and involves deacylation of mischarged Ala-tRNA(Pro). The misacylated Cys-tRNA(Pro) is not edited by ProRS.</text>
</comment>
<comment type="catalytic activity">
    <reaction evidence="1">
        <text>tRNA(Pro) + L-proline + ATP = L-prolyl-tRNA(Pro) + AMP + diphosphate</text>
        <dbReference type="Rhea" id="RHEA:14305"/>
        <dbReference type="Rhea" id="RHEA-COMP:9700"/>
        <dbReference type="Rhea" id="RHEA-COMP:9702"/>
        <dbReference type="ChEBI" id="CHEBI:30616"/>
        <dbReference type="ChEBI" id="CHEBI:33019"/>
        <dbReference type="ChEBI" id="CHEBI:60039"/>
        <dbReference type="ChEBI" id="CHEBI:78442"/>
        <dbReference type="ChEBI" id="CHEBI:78532"/>
        <dbReference type="ChEBI" id="CHEBI:456215"/>
        <dbReference type="EC" id="6.1.1.15"/>
    </reaction>
</comment>
<comment type="subunit">
    <text evidence="1">Homodimer.</text>
</comment>
<comment type="subcellular location">
    <subcellularLocation>
        <location evidence="1">Cytoplasm</location>
    </subcellularLocation>
</comment>
<comment type="domain">
    <text evidence="1">Consists of three domains: the N-terminal catalytic domain, the editing domain and the C-terminal anticodon-binding domain.</text>
</comment>
<comment type="similarity">
    <text evidence="1">Belongs to the class-II aminoacyl-tRNA synthetase family. ProS type 1 subfamily.</text>
</comment>
<keyword id="KW-0030">Aminoacyl-tRNA synthetase</keyword>
<keyword id="KW-0067">ATP-binding</keyword>
<keyword id="KW-0963">Cytoplasm</keyword>
<keyword id="KW-0436">Ligase</keyword>
<keyword id="KW-0547">Nucleotide-binding</keyword>
<keyword id="KW-0648">Protein biosynthesis</keyword>
<organism>
    <name type="scientific">Limosilactobacillus reuteri subsp. reuteri (strain JCM 1112)</name>
    <name type="common">Lactobacillus reuteri</name>
    <dbReference type="NCBI Taxonomy" id="557433"/>
    <lineage>
        <taxon>Bacteria</taxon>
        <taxon>Bacillati</taxon>
        <taxon>Bacillota</taxon>
        <taxon>Bacilli</taxon>
        <taxon>Lactobacillales</taxon>
        <taxon>Lactobacillaceae</taxon>
        <taxon>Limosilactobacillus</taxon>
    </lineage>
</organism>
<evidence type="ECO:0000255" key="1">
    <source>
        <dbReference type="HAMAP-Rule" id="MF_01569"/>
    </source>
</evidence>
<name>SYP_LIMRJ</name>
<protein>
    <recommendedName>
        <fullName evidence="1">Proline--tRNA ligase</fullName>
        <ecNumber evidence="1">6.1.1.15</ecNumber>
    </recommendedName>
    <alternativeName>
        <fullName evidence="1">Prolyl-tRNA synthetase</fullName>
        <shortName evidence="1">ProRS</shortName>
    </alternativeName>
</protein>
<proteinExistence type="inferred from homology"/>
<accession>B2G6V0</accession>
<feature type="chain" id="PRO_1000199400" description="Proline--tRNA ligase">
    <location>
        <begin position="1"/>
        <end position="577"/>
    </location>
</feature>
<sequence length="577" mass="64257">MKQSKVLIPTKKEAPSDAEALSHKMMIRAGYIYQVSAGVWSYLPLAYRVIRKVENIIRDEMDKAGAVEMLMPGLLPADLWKESGRYESYGDNLFKLKDRRDRDFILGPTHEETFTEVLRDSIKSYKKLPLVVYQLQDKFRDEDRPRYGILRGKEFEMLDGYSFSADQEGLDEAYNNQAKAYRNIFDRIGLNYKVILADSGTMGGKNSQEFSAPAEVGEDIIAYTDGDYAANIEKAESKFTGVQQTAVPAPIEKKATPGAHTVYEAAESLDLDPNQVIKSMLYIAKMSEDEYQPVLVLMRGDDEVNEAKVINALDCEELELATEEDAEKYLNAHPGSLGPVGVGEEVKILADNYVKVLVNMACGANEDGYHYVNANIDRDFRVDQFGDFRNVKEGEIAPDGQPLKFTPGIEIGHIFKLGTHYSSKLGAQVLDSNGRLTDVIMGSYGIGVTRLLSAVAEQNADENGLVWPDSIAPFDVHVIPVNAKKEDQMAMADKIDQQLTEAGYEVLVDDRKERAGVKFADSDLIGIPIRVTVGKKAQDGIVEIKIRKTGETVEVKQEELVNTVGILLKQLNEEKNK</sequence>
<dbReference type="EC" id="6.1.1.15" evidence="1"/>
<dbReference type="EMBL" id="AP007281">
    <property type="protein sequence ID" value="BAG25182.1"/>
    <property type="molecule type" value="Genomic_DNA"/>
</dbReference>
<dbReference type="RefSeq" id="WP_003668190.1">
    <property type="nucleotide sequence ID" value="NC_010609.1"/>
</dbReference>
<dbReference type="SMR" id="B2G6V0"/>
<dbReference type="KEGG" id="lrf:LAR_0666"/>
<dbReference type="HOGENOM" id="CLU_016739_0_0_9"/>
<dbReference type="GO" id="GO:0005829">
    <property type="term" value="C:cytosol"/>
    <property type="evidence" value="ECO:0007669"/>
    <property type="project" value="TreeGrafter"/>
</dbReference>
<dbReference type="GO" id="GO:0002161">
    <property type="term" value="F:aminoacyl-tRNA deacylase activity"/>
    <property type="evidence" value="ECO:0007669"/>
    <property type="project" value="InterPro"/>
</dbReference>
<dbReference type="GO" id="GO:0005524">
    <property type="term" value="F:ATP binding"/>
    <property type="evidence" value="ECO:0007669"/>
    <property type="project" value="UniProtKB-UniRule"/>
</dbReference>
<dbReference type="GO" id="GO:0140096">
    <property type="term" value="F:catalytic activity, acting on a protein"/>
    <property type="evidence" value="ECO:0007669"/>
    <property type="project" value="UniProtKB-ARBA"/>
</dbReference>
<dbReference type="GO" id="GO:0004827">
    <property type="term" value="F:proline-tRNA ligase activity"/>
    <property type="evidence" value="ECO:0007669"/>
    <property type="project" value="UniProtKB-UniRule"/>
</dbReference>
<dbReference type="GO" id="GO:0016740">
    <property type="term" value="F:transferase activity"/>
    <property type="evidence" value="ECO:0007669"/>
    <property type="project" value="UniProtKB-ARBA"/>
</dbReference>
<dbReference type="GO" id="GO:0006433">
    <property type="term" value="P:prolyl-tRNA aminoacylation"/>
    <property type="evidence" value="ECO:0007669"/>
    <property type="project" value="UniProtKB-UniRule"/>
</dbReference>
<dbReference type="CDD" id="cd04334">
    <property type="entry name" value="ProRS-INS"/>
    <property type="match status" value="1"/>
</dbReference>
<dbReference type="CDD" id="cd00861">
    <property type="entry name" value="ProRS_anticodon_short"/>
    <property type="match status" value="1"/>
</dbReference>
<dbReference type="CDD" id="cd00779">
    <property type="entry name" value="ProRS_core_prok"/>
    <property type="match status" value="1"/>
</dbReference>
<dbReference type="FunFam" id="3.40.50.800:FF:000011">
    <property type="entry name" value="Proline--tRNA ligase"/>
    <property type="match status" value="1"/>
</dbReference>
<dbReference type="Gene3D" id="3.40.50.800">
    <property type="entry name" value="Anticodon-binding domain"/>
    <property type="match status" value="1"/>
</dbReference>
<dbReference type="Gene3D" id="3.30.930.10">
    <property type="entry name" value="Bira Bifunctional Protein, Domain 2"/>
    <property type="match status" value="2"/>
</dbReference>
<dbReference type="Gene3D" id="3.90.960.10">
    <property type="entry name" value="YbaK/aminoacyl-tRNA synthetase-associated domain"/>
    <property type="match status" value="1"/>
</dbReference>
<dbReference type="HAMAP" id="MF_01569">
    <property type="entry name" value="Pro_tRNA_synth_type1"/>
    <property type="match status" value="1"/>
</dbReference>
<dbReference type="InterPro" id="IPR002314">
    <property type="entry name" value="aa-tRNA-synt_IIb"/>
</dbReference>
<dbReference type="InterPro" id="IPR006195">
    <property type="entry name" value="aa-tRNA-synth_II"/>
</dbReference>
<dbReference type="InterPro" id="IPR045864">
    <property type="entry name" value="aa-tRNA-synth_II/BPL/LPL"/>
</dbReference>
<dbReference type="InterPro" id="IPR004154">
    <property type="entry name" value="Anticodon-bd"/>
</dbReference>
<dbReference type="InterPro" id="IPR036621">
    <property type="entry name" value="Anticodon-bd_dom_sf"/>
</dbReference>
<dbReference type="InterPro" id="IPR002316">
    <property type="entry name" value="Pro-tRNA-ligase_IIa"/>
</dbReference>
<dbReference type="InterPro" id="IPR004500">
    <property type="entry name" value="Pro-tRNA-synth_IIa_bac-type"/>
</dbReference>
<dbReference type="InterPro" id="IPR023717">
    <property type="entry name" value="Pro-tRNA-Synthase_IIa_type1"/>
</dbReference>
<dbReference type="InterPro" id="IPR050062">
    <property type="entry name" value="Pro-tRNA_synthetase"/>
</dbReference>
<dbReference type="InterPro" id="IPR044140">
    <property type="entry name" value="ProRS_anticodon_short"/>
</dbReference>
<dbReference type="InterPro" id="IPR033730">
    <property type="entry name" value="ProRS_core_prok"/>
</dbReference>
<dbReference type="InterPro" id="IPR036754">
    <property type="entry name" value="YbaK/aa-tRNA-synt-asso_dom_sf"/>
</dbReference>
<dbReference type="InterPro" id="IPR007214">
    <property type="entry name" value="YbaK/aa-tRNA-synth-assoc-dom"/>
</dbReference>
<dbReference type="NCBIfam" id="NF006625">
    <property type="entry name" value="PRK09194.1"/>
    <property type="match status" value="1"/>
</dbReference>
<dbReference type="NCBIfam" id="TIGR00409">
    <property type="entry name" value="proS_fam_II"/>
    <property type="match status" value="1"/>
</dbReference>
<dbReference type="PANTHER" id="PTHR42753">
    <property type="entry name" value="MITOCHONDRIAL RIBOSOME PROTEIN L39/PROLYL-TRNA LIGASE FAMILY MEMBER"/>
    <property type="match status" value="1"/>
</dbReference>
<dbReference type="PANTHER" id="PTHR42753:SF2">
    <property type="entry name" value="PROLINE--TRNA LIGASE"/>
    <property type="match status" value="1"/>
</dbReference>
<dbReference type="Pfam" id="PF03129">
    <property type="entry name" value="HGTP_anticodon"/>
    <property type="match status" value="1"/>
</dbReference>
<dbReference type="Pfam" id="PF00587">
    <property type="entry name" value="tRNA-synt_2b"/>
    <property type="match status" value="1"/>
</dbReference>
<dbReference type="Pfam" id="PF04073">
    <property type="entry name" value="tRNA_edit"/>
    <property type="match status" value="1"/>
</dbReference>
<dbReference type="PRINTS" id="PR01046">
    <property type="entry name" value="TRNASYNTHPRO"/>
</dbReference>
<dbReference type="SUPFAM" id="SSF52954">
    <property type="entry name" value="Class II aaRS ABD-related"/>
    <property type="match status" value="1"/>
</dbReference>
<dbReference type="SUPFAM" id="SSF55681">
    <property type="entry name" value="Class II aaRS and biotin synthetases"/>
    <property type="match status" value="1"/>
</dbReference>
<dbReference type="SUPFAM" id="SSF55826">
    <property type="entry name" value="YbaK/ProRS associated domain"/>
    <property type="match status" value="1"/>
</dbReference>
<dbReference type="PROSITE" id="PS50862">
    <property type="entry name" value="AA_TRNA_LIGASE_II"/>
    <property type="match status" value="1"/>
</dbReference>
<gene>
    <name evidence="1" type="primary">proS</name>
    <name type="ordered locus">LAR_0666</name>
</gene>